<reference key="1">
    <citation type="journal article" date="2002" name="DNA Res.">
        <title>Complete genomic sequence of nitrogen-fixing symbiotic bacterium Bradyrhizobium japonicum USDA110.</title>
        <authorList>
            <person name="Kaneko T."/>
            <person name="Nakamura Y."/>
            <person name="Sato S."/>
            <person name="Minamisawa K."/>
            <person name="Uchiumi T."/>
            <person name="Sasamoto S."/>
            <person name="Watanabe A."/>
            <person name="Idesawa K."/>
            <person name="Iriguchi M."/>
            <person name="Kawashima K."/>
            <person name="Kohara M."/>
            <person name="Matsumoto M."/>
            <person name="Shimpo S."/>
            <person name="Tsuruoka H."/>
            <person name="Wada T."/>
            <person name="Yamada M."/>
            <person name="Tabata S."/>
        </authorList>
    </citation>
    <scope>NUCLEOTIDE SEQUENCE [LARGE SCALE GENOMIC DNA]</scope>
    <source>
        <strain>JCM 10833 / BCRC 13528 / IAM 13628 / NBRC 14792 / USDA 110</strain>
    </source>
</reference>
<comment type="similarity">
    <text evidence="2">Belongs to the 4-oxalocrotonate tautomerase family.</text>
</comment>
<comment type="sequence caution" evidence="2">
    <conflict type="erroneous initiation">
        <sequence resource="EMBL-CDS" id="BAC52721"/>
    </conflict>
</comment>
<sequence>MPEITVSMAEGRTDEQKAGMMRDITQALVKNLGVDADAVVIQINEAPLRHKMKGGKTFVERAAAAKK</sequence>
<dbReference type="EC" id="5.3.2.-"/>
<dbReference type="EMBL" id="BA000040">
    <property type="protein sequence ID" value="BAC52721.1"/>
    <property type="status" value="ALT_INIT"/>
    <property type="molecule type" value="Genomic_DNA"/>
</dbReference>
<dbReference type="RefSeq" id="NP_774096.1">
    <property type="nucleotide sequence ID" value="NC_004463.1"/>
</dbReference>
<dbReference type="RefSeq" id="WP_011090190.1">
    <property type="nucleotide sequence ID" value="NZ_CP011360.1"/>
</dbReference>
<dbReference type="SMR" id="Q89DI3"/>
<dbReference type="STRING" id="224911.AAV28_34965"/>
<dbReference type="EnsemblBacteria" id="BAC52721">
    <property type="protein sequence ID" value="BAC52721"/>
    <property type="gene ID" value="BAC52721"/>
</dbReference>
<dbReference type="KEGG" id="bja:bsl7456"/>
<dbReference type="PATRIC" id="fig|224911.44.peg.7554"/>
<dbReference type="eggNOG" id="COG1942">
    <property type="taxonomic scope" value="Bacteria"/>
</dbReference>
<dbReference type="HOGENOM" id="CLU_148073_5_0_5"/>
<dbReference type="InParanoid" id="Q89DI3"/>
<dbReference type="OrthoDB" id="9799841at2"/>
<dbReference type="PRO" id="PR:Q89DI3"/>
<dbReference type="Proteomes" id="UP000002526">
    <property type="component" value="Chromosome"/>
</dbReference>
<dbReference type="GO" id="GO:0016853">
    <property type="term" value="F:isomerase activity"/>
    <property type="evidence" value="ECO:0000318"/>
    <property type="project" value="GO_Central"/>
</dbReference>
<dbReference type="Gene3D" id="3.30.429.10">
    <property type="entry name" value="Macrophage Migration Inhibitory Factor"/>
    <property type="match status" value="1"/>
</dbReference>
<dbReference type="InterPro" id="IPR004370">
    <property type="entry name" value="4-OT-like_dom"/>
</dbReference>
<dbReference type="InterPro" id="IPR014347">
    <property type="entry name" value="Tautomerase/MIF_sf"/>
</dbReference>
<dbReference type="PANTHER" id="PTHR35530:SF1">
    <property type="entry name" value="2-HYDROXYMUCONATE TAUTOMERASE"/>
    <property type="match status" value="1"/>
</dbReference>
<dbReference type="PANTHER" id="PTHR35530">
    <property type="entry name" value="TAUTOMERASE-RELATED"/>
    <property type="match status" value="1"/>
</dbReference>
<dbReference type="Pfam" id="PF01361">
    <property type="entry name" value="Tautomerase"/>
    <property type="match status" value="1"/>
</dbReference>
<dbReference type="SUPFAM" id="SSF55331">
    <property type="entry name" value="Tautomerase/MIF"/>
    <property type="match status" value="1"/>
</dbReference>
<feature type="initiator methionine" description="Removed" evidence="1">
    <location>
        <position position="1"/>
    </location>
</feature>
<feature type="chain" id="PRO_0000209524" description="Probable tautomerase bsl7456">
    <location>
        <begin position="2"/>
        <end position="67"/>
    </location>
</feature>
<feature type="active site" description="Proton acceptor; via imino nitrogen" evidence="1">
    <location>
        <position position="2"/>
    </location>
</feature>
<accession>Q89DI3</accession>
<evidence type="ECO:0000250" key="1"/>
<evidence type="ECO:0000305" key="2"/>
<proteinExistence type="inferred from homology"/>
<gene>
    <name type="ordered locus">bsl7456</name>
</gene>
<name>Y7456_BRADU</name>
<organism>
    <name type="scientific">Bradyrhizobium diazoefficiens (strain JCM 10833 / BCRC 13528 / IAM 13628 / NBRC 14792 / USDA 110)</name>
    <dbReference type="NCBI Taxonomy" id="224911"/>
    <lineage>
        <taxon>Bacteria</taxon>
        <taxon>Pseudomonadati</taxon>
        <taxon>Pseudomonadota</taxon>
        <taxon>Alphaproteobacteria</taxon>
        <taxon>Hyphomicrobiales</taxon>
        <taxon>Nitrobacteraceae</taxon>
        <taxon>Bradyrhizobium</taxon>
    </lineage>
</organism>
<protein>
    <recommendedName>
        <fullName>Probable tautomerase bsl7456</fullName>
        <ecNumber>5.3.2.-</ecNumber>
    </recommendedName>
</protein>
<keyword id="KW-0413">Isomerase</keyword>
<keyword id="KW-1185">Reference proteome</keyword>